<dbReference type="EMBL" id="BC113298">
    <property type="protein sequence ID" value="AAI13299.1"/>
    <property type="molecule type" value="mRNA"/>
</dbReference>
<dbReference type="RefSeq" id="NP_001039440.1">
    <property type="nucleotide sequence ID" value="NM_001045975.1"/>
</dbReference>
<dbReference type="RefSeq" id="NP_001421690.1">
    <property type="nucleotide sequence ID" value="NM_001434761.1"/>
</dbReference>
<dbReference type="RefSeq" id="XP_024846327.1">
    <property type="nucleotide sequence ID" value="XM_024990559.2"/>
</dbReference>
<dbReference type="SMR" id="Q2HJ60"/>
<dbReference type="FunCoup" id="Q2HJ60">
    <property type="interactions" value="3111"/>
</dbReference>
<dbReference type="STRING" id="9913.ENSBTAP00000007527"/>
<dbReference type="PaxDb" id="9913-ENSBTAP00000007527"/>
<dbReference type="PeptideAtlas" id="Q2HJ60"/>
<dbReference type="Ensembl" id="ENSBTAT00000007527.5">
    <property type="protein sequence ID" value="ENSBTAP00000007527.3"/>
    <property type="gene ID" value="ENSBTAG00000005726.7"/>
</dbReference>
<dbReference type="GeneID" id="507564"/>
<dbReference type="KEGG" id="bta:507564"/>
<dbReference type="CTD" id="3181"/>
<dbReference type="VEuPathDB" id="HostDB:ENSBTAG00000005726"/>
<dbReference type="VGNC" id="VGNC:29894">
    <property type="gene designation" value="HNRNPA2B1"/>
</dbReference>
<dbReference type="eggNOG" id="KOG0118">
    <property type="taxonomic scope" value="Eukaryota"/>
</dbReference>
<dbReference type="GeneTree" id="ENSGT00940000154431"/>
<dbReference type="HOGENOM" id="CLU_012062_1_0_1"/>
<dbReference type="InParanoid" id="Q2HJ60"/>
<dbReference type="OMA" id="MDFNRYM"/>
<dbReference type="OrthoDB" id="1875751at2759"/>
<dbReference type="TreeFam" id="TF351342"/>
<dbReference type="Reactome" id="R-BTA-72163">
    <property type="pathway name" value="mRNA Splicing - Major Pathway"/>
</dbReference>
<dbReference type="Reactome" id="R-BTA-72203">
    <property type="pathway name" value="Processing of Capped Intron-Containing Pre-mRNA"/>
</dbReference>
<dbReference type="Proteomes" id="UP000009136">
    <property type="component" value="Chromosome 4"/>
</dbReference>
<dbReference type="Bgee" id="ENSBTAG00000005726">
    <property type="expression patterns" value="Expressed in prefrontal cortex and 104 other cell types or tissues"/>
</dbReference>
<dbReference type="GO" id="GO:0071013">
    <property type="term" value="C:catalytic step 2 spliceosome"/>
    <property type="evidence" value="ECO:0000318"/>
    <property type="project" value="GO_Central"/>
</dbReference>
<dbReference type="GO" id="GO:0005737">
    <property type="term" value="C:cytoplasm"/>
    <property type="evidence" value="ECO:0000250"/>
    <property type="project" value="UniProtKB"/>
</dbReference>
<dbReference type="GO" id="GO:0070062">
    <property type="term" value="C:extracellular exosome"/>
    <property type="evidence" value="ECO:0000250"/>
    <property type="project" value="UniProtKB"/>
</dbReference>
<dbReference type="GO" id="GO:0005654">
    <property type="term" value="C:nucleoplasm"/>
    <property type="evidence" value="ECO:0007669"/>
    <property type="project" value="UniProtKB-SubCell"/>
</dbReference>
<dbReference type="GO" id="GO:0005634">
    <property type="term" value="C:nucleus"/>
    <property type="evidence" value="ECO:0000250"/>
    <property type="project" value="UniProtKB"/>
</dbReference>
<dbReference type="GO" id="GO:1990904">
    <property type="term" value="C:ribonucleoprotein complex"/>
    <property type="evidence" value="ECO:0000250"/>
    <property type="project" value="UniProtKB"/>
</dbReference>
<dbReference type="GO" id="GO:0035198">
    <property type="term" value="F:miRNA binding"/>
    <property type="evidence" value="ECO:0000250"/>
    <property type="project" value="UniProtKB"/>
</dbReference>
<dbReference type="GO" id="GO:0003730">
    <property type="term" value="F:mRNA 3'-UTR binding"/>
    <property type="evidence" value="ECO:0000250"/>
    <property type="project" value="UniProtKB"/>
</dbReference>
<dbReference type="GO" id="GO:1990247">
    <property type="term" value="F:N6-methyladenosine-containing RNA reader activity"/>
    <property type="evidence" value="ECO:0000250"/>
    <property type="project" value="UniProtKB"/>
</dbReference>
<dbReference type="GO" id="GO:0043047">
    <property type="term" value="F:single-stranded telomeric DNA binding"/>
    <property type="evidence" value="ECO:0000250"/>
    <property type="project" value="UniProtKB"/>
</dbReference>
<dbReference type="GO" id="GO:1990428">
    <property type="term" value="P:miRNA transport"/>
    <property type="evidence" value="ECO:0000250"/>
    <property type="project" value="UniProtKB"/>
</dbReference>
<dbReference type="GO" id="GO:0006406">
    <property type="term" value="P:mRNA export from nucleus"/>
    <property type="evidence" value="ECO:0000250"/>
    <property type="project" value="UniProtKB"/>
</dbReference>
<dbReference type="GO" id="GO:0000398">
    <property type="term" value="P:mRNA splicing, via spliceosome"/>
    <property type="evidence" value="ECO:0000250"/>
    <property type="project" value="UniProtKB"/>
</dbReference>
<dbReference type="GO" id="GO:0051028">
    <property type="term" value="P:mRNA transport"/>
    <property type="evidence" value="ECO:0000318"/>
    <property type="project" value="GO_Central"/>
</dbReference>
<dbReference type="GO" id="GO:0031053">
    <property type="term" value="P:primary miRNA processing"/>
    <property type="evidence" value="ECO:0000250"/>
    <property type="project" value="UniProtKB"/>
</dbReference>
<dbReference type="CDD" id="cd12762">
    <property type="entry name" value="RRM1_hnRNPA2B1"/>
    <property type="match status" value="1"/>
</dbReference>
<dbReference type="CDD" id="cd12581">
    <property type="entry name" value="RRM2_hnRNPA2B1"/>
    <property type="match status" value="1"/>
</dbReference>
<dbReference type="FunFam" id="3.30.70.330:FF:000040">
    <property type="entry name" value="Heterogeneous nuclear ribonucleoprotein A2/B1"/>
    <property type="match status" value="1"/>
</dbReference>
<dbReference type="FunFam" id="3.30.70.330:FF:000108">
    <property type="entry name" value="Heterogeneous nuclear ribonucleoproteins A2/B1"/>
    <property type="match status" value="1"/>
</dbReference>
<dbReference type="Gene3D" id="3.30.70.330">
    <property type="match status" value="2"/>
</dbReference>
<dbReference type="InterPro" id="IPR021662">
    <property type="entry name" value="HnRNPA1/A2_C"/>
</dbReference>
<dbReference type="InterPro" id="IPR034486">
    <property type="entry name" value="hnRNPA2B1_RRM1"/>
</dbReference>
<dbReference type="InterPro" id="IPR012677">
    <property type="entry name" value="Nucleotide-bd_a/b_plait_sf"/>
</dbReference>
<dbReference type="InterPro" id="IPR035979">
    <property type="entry name" value="RBD_domain_sf"/>
</dbReference>
<dbReference type="InterPro" id="IPR000504">
    <property type="entry name" value="RRM_dom"/>
</dbReference>
<dbReference type="PANTHER" id="PTHR48026:SF13">
    <property type="entry name" value="HETEROGENEOUS NUCLEAR RIBONUCLEOPROTEINS A2_B1"/>
    <property type="match status" value="1"/>
</dbReference>
<dbReference type="PANTHER" id="PTHR48026">
    <property type="entry name" value="HOMOLOGOUS TO DROSOPHILA SQD (SQUID) PROTEIN"/>
    <property type="match status" value="1"/>
</dbReference>
<dbReference type="Pfam" id="PF11627">
    <property type="entry name" value="HnRNPA1_LC"/>
    <property type="match status" value="1"/>
</dbReference>
<dbReference type="Pfam" id="PF00076">
    <property type="entry name" value="RRM_1"/>
    <property type="match status" value="2"/>
</dbReference>
<dbReference type="SMART" id="SM00360">
    <property type="entry name" value="RRM"/>
    <property type="match status" value="2"/>
</dbReference>
<dbReference type="SUPFAM" id="SSF54928">
    <property type="entry name" value="RNA-binding domain, RBD"/>
    <property type="match status" value="2"/>
</dbReference>
<dbReference type="PROSITE" id="PS50102">
    <property type="entry name" value="RRM"/>
    <property type="match status" value="2"/>
</dbReference>
<protein>
    <recommendedName>
        <fullName>Heterogeneous nuclear ribonucleoproteins A2/B1</fullName>
        <shortName>hnRNP A2/B1</shortName>
    </recommendedName>
</protein>
<evidence type="ECO:0000250" key="1"/>
<evidence type="ECO:0000250" key="2">
    <source>
        <dbReference type="UniProtKB" id="A7VJC2"/>
    </source>
</evidence>
<evidence type="ECO:0000250" key="3">
    <source>
        <dbReference type="UniProtKB" id="O88569"/>
    </source>
</evidence>
<evidence type="ECO:0000250" key="4">
    <source>
        <dbReference type="UniProtKB" id="P22626"/>
    </source>
</evidence>
<evidence type="ECO:0000255" key="5">
    <source>
        <dbReference type="PROSITE-ProRule" id="PRU00176"/>
    </source>
</evidence>
<evidence type="ECO:0000256" key="6">
    <source>
        <dbReference type="SAM" id="MobiDB-lite"/>
    </source>
</evidence>
<proteinExistence type="evidence at transcript level"/>
<gene>
    <name type="primary">HNRNPA2B1</name>
    <name type="synonym">HNRPA2B1</name>
</gene>
<name>ROA2_BOVIN</name>
<accession>Q2HJ60</accession>
<keyword id="KW-0007">Acetylation</keyword>
<keyword id="KW-1017">Isopeptide bond</keyword>
<keyword id="KW-0488">Methylation</keyword>
<keyword id="KW-0507">mRNA processing</keyword>
<keyword id="KW-0508">mRNA splicing</keyword>
<keyword id="KW-0509">mRNA transport</keyword>
<keyword id="KW-0539">Nucleus</keyword>
<keyword id="KW-0597">Phosphoprotein</keyword>
<keyword id="KW-1185">Reference proteome</keyword>
<keyword id="KW-0677">Repeat</keyword>
<keyword id="KW-0687">Ribonucleoprotein</keyword>
<keyword id="KW-0694">RNA-binding</keyword>
<keyword id="KW-0964">Secreted</keyword>
<keyword id="KW-0747">Spliceosome</keyword>
<keyword id="KW-0813">Transport</keyword>
<keyword id="KW-0832">Ubl conjugation</keyword>
<comment type="function">
    <text evidence="2 4">Heterogeneous nuclear ribonucleoprotein (hnRNP) that associates with nascent pre-mRNAs, packaging them into hnRNP particles. The hnRNP particle arrangement on nascent hnRNA is non-random and sequence-dependent and serves to condense and stabilize the transcripts and minimize tangling and knotting. Packaging plays a role in various processes such as transcription, pre-mRNA processing, RNA nuclear export, subcellular location, mRNA translation and stability of mature mRNAs. Forms hnRNP particles with at least 20 other different hnRNP and heterogeneous nuclear RNA in the nucleus. Involved in transport of specific mRNAs to the cytoplasm in oligodendrocytes and neurons: acts by specifically recognizing and binding the A2RE (21 nucleotide hnRNP A2 response element) or the A2RE11 (derivative 11 nucleotide oligonucleotide) sequence motifs present on some mRNAs, and promotes their transport to the cytoplasm (By similarity). Specifically binds single-stranded telomeric DNA sequences, protecting telomeric DNA repeat against endonuclease digestion (By similarity). Also binds other RNA molecules, such as primary miRNA (pri-miRNAs): acts as a nuclear 'reader' of the N6-methyladenosine (m6A) mark by specifically recognizing and binding a subset of nuclear m6A-containing pri-miRNAs. Binding to m6A-containing pri-miRNAs promotes pri-miRNA processing by enhancing binding of DGCR8 to pri-miRNA transcripts. Involved in miRNA sorting into exosomes following sumoylation, possibly by binding (m6A)-containing pre-miRNAs. Acts as a regulator of efficiency of mRNA splicing, possibly by binding to m6A-containing pre-mRNAs (By similarity). Plays a role in the splicing of pyruvate kinase PKM by binding repressively to sequences flanking PKM exon 9, inhibiting exon 9 inclusion and resulting in exon 10 inclusion and production of the PKM M2 isoform (By similarity).</text>
</comment>
<comment type="subunit">
    <text evidence="4">Identified in the spliceosome C complex. Identified in a IGF2BP1-dependent mRNP granule complex containing untranslated mRNAs. Interacts with IGF2BP1. Interacts with C9orf72. Interacts with DGCR8. Interacts with TARDBP. Interacts with CKAP5 (By similarity). Interacts with PPIA/CYPA (By similarity). Interacts (via C-terminus) with FAM76B; the interaction results in retention of HNRNPA2B1 in the nucleus and inhibition of the NF-kappa-B-mediated inflammatory pathway (By similarity). Interacts with NF-kappa-B inhibitors NFKBIA and NFKBIE; the interaction may be mediated by the RRM2 domain of HNRNPA2B1, and HNRNPA2B1 may interact simultaneously with FAM76B and either NFKBIA or NFKBIE to form a complex (By similarity).</text>
</comment>
<comment type="subcellular location">
    <subcellularLocation>
        <location evidence="4">Nucleus</location>
        <location evidence="4">Nucleoplasm</location>
    </subcellularLocation>
    <subcellularLocation>
        <location evidence="4">Cytoplasmic granule</location>
    </subcellularLocation>
    <subcellularLocation>
        <location evidence="4">Secreted</location>
        <location evidence="4">Extracellular exosome</location>
    </subcellularLocation>
    <text evidence="4">Localized in cytoplasmic mRNP granules containing untranslated mRNAs. Component of ribonucleosomes. Not found in the nucleolus. Found in exosomes follwong sumoylation.</text>
</comment>
<comment type="domain">
    <text evidence="4">The disordered region, when incubated at high concentration, is able to polymerize into labile, amyloid-like fibers and form cross-beta polymerization structures, probably driving the formation of hydrogels. In contrast to irreversible, pathogenic amyloids, the fibers polymerized from LC regions disassemble upon dilution. A number of evidence suggests that formation of cross-beta structures by LC regions mediate the formation of RNA granules, liquid-like droplets, and hydrogels.</text>
</comment>
<comment type="PTM">
    <text evidence="4">Sumoylated in exosomes, promoting miRNAs-binding.</text>
</comment>
<comment type="PTM">
    <text evidence="2 4">Asymmetric dimethylation at Arg-254 constitutes the major methylation site (By similarity). According to a report, methylation affects subcellular location and promotes nuclear localization (By similarity). According to another report, methylation at Arg-254 does not influence nucleocytoplasmic shuttling (By similarity).</text>
</comment>
<feature type="chain" id="PRO_0000273979" description="Heterogeneous nuclear ribonucleoproteins A2/B1">
    <location>
        <begin position="1"/>
        <end position="341"/>
    </location>
</feature>
<feature type="domain" description="RRM 1" evidence="5">
    <location>
        <begin position="9"/>
        <end position="92"/>
    </location>
</feature>
<feature type="domain" description="RRM 2" evidence="5">
    <location>
        <begin position="100"/>
        <end position="179"/>
    </location>
</feature>
<feature type="region of interest" description="Disordered" evidence="4">
    <location>
        <begin position="181"/>
        <end position="341"/>
    </location>
</feature>
<feature type="region of interest" description="Nuclear targeting sequence" evidence="1">
    <location>
        <begin position="296"/>
        <end position="335"/>
    </location>
</feature>
<feature type="compositionally biased region" description="Gly residues" evidence="6">
    <location>
        <begin position="190"/>
        <end position="211"/>
    </location>
</feature>
<feature type="compositionally biased region" description="Gly residues" evidence="6">
    <location>
        <begin position="308"/>
        <end position="341"/>
    </location>
</feature>
<feature type="modified residue" description="Phosphoserine" evidence="4">
    <location>
        <position position="17"/>
    </location>
</feature>
<feature type="modified residue" description="Omega-N-methylarginine" evidence="3">
    <location>
        <position position="26"/>
    </location>
</feature>
<feature type="modified residue" description="Phosphoserine" evidence="4">
    <location>
        <position position="73"/>
    </location>
</feature>
<feature type="modified residue" description="N6,N6-dimethyllysine; alternate" evidence="4">
    <location>
        <position position="92"/>
    </location>
</feature>
<feature type="modified residue" description="Phosphothreonine" evidence="4">
    <location>
        <position position="128"/>
    </location>
</feature>
<feature type="modified residue" description="Phosphoserine" evidence="4">
    <location>
        <position position="137"/>
    </location>
</feature>
<feature type="modified residue" description="Phosphothreonine" evidence="4">
    <location>
        <position position="147"/>
    </location>
</feature>
<feature type="modified residue" description="N6-acetyllysine; alternate" evidence="4">
    <location>
        <position position="156"/>
    </location>
</feature>
<feature type="modified residue" description="N6-acetyllysine; alternate" evidence="4">
    <location>
        <position position="161"/>
    </location>
</feature>
<feature type="modified residue" description="Phosphothreonine" evidence="4">
    <location>
        <position position="164"/>
    </location>
</feature>
<feature type="modified residue" description="Phosphoserine" evidence="4">
    <location>
        <position position="177"/>
    </location>
</feature>
<feature type="modified residue" description="Phosphoserine" evidence="4">
    <location>
        <position position="189"/>
    </location>
</feature>
<feature type="modified residue" description="Asymmetric dimethylarginine; alternate" evidence="3">
    <location>
        <position position="191"/>
    </location>
</feature>
<feature type="modified residue" description="Dimethylated arginine; alternate" evidence="4">
    <location>
        <position position="191"/>
    </location>
</feature>
<feature type="modified residue" description="Omega-N-methylarginine; alternate" evidence="4">
    <location>
        <position position="191"/>
    </location>
</feature>
<feature type="modified residue" description="Phosphoserine" evidence="4">
    <location>
        <position position="200"/>
    </location>
</feature>
<feature type="modified residue" description="Asymmetric dimethylarginine; alternate" evidence="3">
    <location>
        <position position="201"/>
    </location>
</feature>
<feature type="modified residue" description="Dimethylated arginine; alternate" evidence="4">
    <location>
        <position position="201"/>
    </location>
</feature>
<feature type="modified residue" description="Omega-N-methylarginine; alternate" evidence="4">
    <location>
        <position position="201"/>
    </location>
</feature>
<feature type="modified residue" description="Phosphoserine" evidence="4">
    <location>
        <position position="213"/>
    </location>
</feature>
<feature type="modified residue" description="Omega-N-methylarginine" evidence="4">
    <location>
        <position position="216"/>
    </location>
</feature>
<feature type="modified residue" description="Phosphoserine" evidence="4">
    <location>
        <position position="219"/>
    </location>
</feature>
<feature type="modified residue" description="Phosphoserine" evidence="4">
    <location>
        <position position="224"/>
    </location>
</feature>
<feature type="modified residue" description="Omega-N-methylarginine" evidence="4">
    <location>
        <position position="226"/>
    </location>
</feature>
<feature type="modified residue" description="Phosphoserine" evidence="4">
    <location>
        <position position="247"/>
    </location>
</feature>
<feature type="modified residue" description="Asymmetric dimethylarginine; alternate" evidence="2">
    <location>
        <position position="254"/>
    </location>
</feature>
<feature type="modified residue" description="Omega-N-methylarginine; alternate" evidence="4">
    <location>
        <position position="254"/>
    </location>
</feature>
<feature type="modified residue" description="Phosphoserine" evidence="4">
    <location>
        <position position="312"/>
    </location>
</feature>
<feature type="modified residue" description="Omega-N-methylarginine" evidence="4">
    <location>
        <position position="313"/>
    </location>
</feature>
<feature type="modified residue" description="Phosphotyrosine" evidence="4">
    <location>
        <position position="319"/>
    </location>
</feature>
<feature type="modified residue" description="Phosphoserine" evidence="4">
    <location>
        <position position="329"/>
    </location>
</feature>
<feature type="modified residue" description="Phosphoserine" evidence="4">
    <location>
        <position position="332"/>
    </location>
</feature>
<feature type="modified residue" description="Phosphotyrosine" evidence="4">
    <location>
        <position position="335"/>
    </location>
</feature>
<feature type="modified residue" description="Omega-N-methylarginine" evidence="4">
    <location>
        <position position="338"/>
    </location>
</feature>
<feature type="cross-link" description="Glycyl lysine isopeptide (Lys-Gly) (interchain with G-Cter in SUMO2)" evidence="4">
    <location>
        <position position="10"/>
    </location>
</feature>
<feature type="cross-link" description="Glycyl lysine isopeptide (Lys-Gly) (interchain with G-Cter in SUMO2); alternate" evidence="4">
    <location>
        <position position="92"/>
    </location>
</feature>
<feature type="cross-link" description="Glycyl lysine isopeptide (Lys-Gly) (interchain with G-Cter in SUMO2)" evidence="4">
    <location>
        <position position="100"/>
    </location>
</feature>
<feature type="cross-link" description="Glycyl lysine isopeptide (Lys-Gly) (interchain with G-Cter in SUMO2)" evidence="4">
    <location>
        <position position="108"/>
    </location>
</feature>
<feature type="cross-link" description="Glycyl lysine isopeptide (Lys-Gly) (interchain with G-Cter in SUMO2)" evidence="4">
    <location>
        <position position="125"/>
    </location>
</feature>
<feature type="cross-link" description="Glycyl lysine isopeptide (Lys-Gly) (interchain with G-Cter in SUMO2)" evidence="4">
    <location>
        <position position="140"/>
    </location>
</feature>
<feature type="cross-link" description="Glycyl lysine isopeptide (Lys-Gly) (interchain with G-Cter in SUMO2); alternate" evidence="4">
    <location>
        <position position="156"/>
    </location>
</feature>
<feature type="cross-link" description="Glycyl lysine isopeptide (Lys-Gly) (interchain with G-Cter in SUMO2); alternate" evidence="4">
    <location>
        <position position="161"/>
    </location>
</feature>
<feature type="cross-link" description="Glycyl lysine isopeptide (Lys-Gly) (interchain with G-Cter in SUMO2)" evidence="4">
    <location>
        <position position="174"/>
    </location>
</feature>
<sequence length="341" mass="36006">MEREKEQFRKLFIGGLSFETTEESLRNYYEQWGKLTDCVVMRDPASKRSRGFGFVTFSSMAEVDAAMAARPHSIDGRVVEPKRAVAREESGKPGAHVTVKKLFVGGIKEDTEEHHLRDYFEEYGKIDTIEIITDRQSGKKRGFGFVTFDDHDPVDKIVLQKYHTINGHNAEVRKALSRQEMQEVQSSRSGRGGNFGFGDSRGGGGNFGPGPGSNFRGGSDGYGSGRGFGDGYNGYGGGPGGGNFGGSPGYGGGRGGYGGGGPGYGNQGGGYGGGYDNYGGGNYGSGNYNDFGNYNQQPSNYGPMKSGNFGGSRNMGGPYGGGNYGPGGSGGSGGYGGRSRY</sequence>
<reference key="1">
    <citation type="submission" date="2006-02" db="EMBL/GenBank/DDBJ databases">
        <authorList>
            <consortium name="NIH - Mammalian Gene Collection (MGC) project"/>
        </authorList>
    </citation>
    <scope>NUCLEOTIDE SEQUENCE [LARGE SCALE MRNA]</scope>
    <source>
        <strain>Hereford</strain>
        <tissue>Uterus</tissue>
    </source>
</reference>
<organism>
    <name type="scientific">Bos taurus</name>
    <name type="common">Bovine</name>
    <dbReference type="NCBI Taxonomy" id="9913"/>
    <lineage>
        <taxon>Eukaryota</taxon>
        <taxon>Metazoa</taxon>
        <taxon>Chordata</taxon>
        <taxon>Craniata</taxon>
        <taxon>Vertebrata</taxon>
        <taxon>Euteleostomi</taxon>
        <taxon>Mammalia</taxon>
        <taxon>Eutheria</taxon>
        <taxon>Laurasiatheria</taxon>
        <taxon>Artiodactyla</taxon>
        <taxon>Ruminantia</taxon>
        <taxon>Pecora</taxon>
        <taxon>Bovidae</taxon>
        <taxon>Bovinae</taxon>
        <taxon>Bos</taxon>
    </lineage>
</organism>